<feature type="chain" id="PRO_1000005878" description="DNA-directed RNA polymerase subunit omega">
    <location>
        <begin position="1"/>
        <end position="136"/>
    </location>
</feature>
<proteinExistence type="inferred from homology"/>
<sequence length="136" mass="14776">MARVTVEDCIEQIPNRFELVLLAAQRARNLSRGASITIDRDNDKNPVVALREIADSTVDFGGLEQDLVKSLSRVPDPEPADEEVQDLIPTDQNIFGLQDVSAEEEAAAMAAESEEMTSEDIAAAIEAELGGGRPRR</sequence>
<reference key="1">
    <citation type="submission" date="2007-05" db="EMBL/GenBank/DDBJ databases">
        <title>Complete sequence of chromosome of Acidiphilium cryptum JF-5.</title>
        <authorList>
            <consortium name="US DOE Joint Genome Institute"/>
            <person name="Copeland A."/>
            <person name="Lucas S."/>
            <person name="Lapidus A."/>
            <person name="Barry K."/>
            <person name="Detter J.C."/>
            <person name="Glavina del Rio T."/>
            <person name="Hammon N."/>
            <person name="Israni S."/>
            <person name="Dalin E."/>
            <person name="Tice H."/>
            <person name="Pitluck S."/>
            <person name="Sims D."/>
            <person name="Brettin T."/>
            <person name="Bruce D."/>
            <person name="Han C."/>
            <person name="Schmutz J."/>
            <person name="Larimer F."/>
            <person name="Land M."/>
            <person name="Hauser L."/>
            <person name="Kyrpides N."/>
            <person name="Kim E."/>
            <person name="Magnuson T."/>
            <person name="Richardson P."/>
        </authorList>
    </citation>
    <scope>NUCLEOTIDE SEQUENCE [LARGE SCALE GENOMIC DNA]</scope>
    <source>
        <strain>JF-5</strain>
    </source>
</reference>
<gene>
    <name evidence="1" type="primary">rpoZ</name>
    <name type="ordered locus">Acry_0530</name>
</gene>
<protein>
    <recommendedName>
        <fullName evidence="1">DNA-directed RNA polymerase subunit omega</fullName>
        <shortName evidence="1">RNAP omega subunit</shortName>
        <ecNumber evidence="1">2.7.7.6</ecNumber>
    </recommendedName>
    <alternativeName>
        <fullName evidence="1">RNA polymerase omega subunit</fullName>
    </alternativeName>
    <alternativeName>
        <fullName evidence="1">Transcriptase subunit omega</fullName>
    </alternativeName>
</protein>
<organism>
    <name type="scientific">Acidiphilium cryptum (strain JF-5)</name>
    <dbReference type="NCBI Taxonomy" id="349163"/>
    <lineage>
        <taxon>Bacteria</taxon>
        <taxon>Pseudomonadati</taxon>
        <taxon>Pseudomonadota</taxon>
        <taxon>Alphaproteobacteria</taxon>
        <taxon>Acetobacterales</taxon>
        <taxon>Acidocellaceae</taxon>
        <taxon>Acidiphilium</taxon>
    </lineage>
</organism>
<keyword id="KW-0240">DNA-directed RNA polymerase</keyword>
<keyword id="KW-0548">Nucleotidyltransferase</keyword>
<keyword id="KW-1185">Reference proteome</keyword>
<keyword id="KW-0804">Transcription</keyword>
<keyword id="KW-0808">Transferase</keyword>
<dbReference type="EC" id="2.7.7.6" evidence="1"/>
<dbReference type="EMBL" id="CP000697">
    <property type="protein sequence ID" value="ABQ29754.1"/>
    <property type="molecule type" value="Genomic_DNA"/>
</dbReference>
<dbReference type="RefSeq" id="WP_007421785.1">
    <property type="nucleotide sequence ID" value="NC_009484.1"/>
</dbReference>
<dbReference type="SMR" id="A5FVX2"/>
<dbReference type="STRING" id="349163.Acry_0530"/>
<dbReference type="KEGG" id="acr:Acry_0530"/>
<dbReference type="eggNOG" id="COG1758">
    <property type="taxonomic scope" value="Bacteria"/>
</dbReference>
<dbReference type="HOGENOM" id="CLU_125406_2_0_5"/>
<dbReference type="Proteomes" id="UP000000245">
    <property type="component" value="Chromosome"/>
</dbReference>
<dbReference type="GO" id="GO:0000428">
    <property type="term" value="C:DNA-directed RNA polymerase complex"/>
    <property type="evidence" value="ECO:0007669"/>
    <property type="project" value="UniProtKB-KW"/>
</dbReference>
<dbReference type="GO" id="GO:0003677">
    <property type="term" value="F:DNA binding"/>
    <property type="evidence" value="ECO:0007669"/>
    <property type="project" value="UniProtKB-UniRule"/>
</dbReference>
<dbReference type="GO" id="GO:0003899">
    <property type="term" value="F:DNA-directed RNA polymerase activity"/>
    <property type="evidence" value="ECO:0007669"/>
    <property type="project" value="UniProtKB-UniRule"/>
</dbReference>
<dbReference type="GO" id="GO:0006351">
    <property type="term" value="P:DNA-templated transcription"/>
    <property type="evidence" value="ECO:0007669"/>
    <property type="project" value="UniProtKB-UniRule"/>
</dbReference>
<dbReference type="Gene3D" id="3.90.940.10">
    <property type="match status" value="1"/>
</dbReference>
<dbReference type="HAMAP" id="MF_00366">
    <property type="entry name" value="RNApol_bact_RpoZ"/>
    <property type="match status" value="1"/>
</dbReference>
<dbReference type="InterPro" id="IPR003716">
    <property type="entry name" value="DNA-dir_RNA_pol_omega"/>
</dbReference>
<dbReference type="InterPro" id="IPR006110">
    <property type="entry name" value="Pol_omega/Rpo6/RPB6"/>
</dbReference>
<dbReference type="InterPro" id="IPR036161">
    <property type="entry name" value="RPB6/omega-like_sf"/>
</dbReference>
<dbReference type="NCBIfam" id="TIGR00690">
    <property type="entry name" value="rpoZ"/>
    <property type="match status" value="1"/>
</dbReference>
<dbReference type="PANTHER" id="PTHR34476">
    <property type="entry name" value="DNA-DIRECTED RNA POLYMERASE SUBUNIT OMEGA"/>
    <property type="match status" value="1"/>
</dbReference>
<dbReference type="PANTHER" id="PTHR34476:SF1">
    <property type="entry name" value="DNA-DIRECTED RNA POLYMERASE SUBUNIT OMEGA"/>
    <property type="match status" value="1"/>
</dbReference>
<dbReference type="Pfam" id="PF01192">
    <property type="entry name" value="RNA_pol_Rpb6"/>
    <property type="match status" value="1"/>
</dbReference>
<dbReference type="SMART" id="SM01409">
    <property type="entry name" value="RNA_pol_Rpb6"/>
    <property type="match status" value="1"/>
</dbReference>
<dbReference type="SUPFAM" id="SSF63562">
    <property type="entry name" value="RPB6/omega subunit-like"/>
    <property type="match status" value="1"/>
</dbReference>
<name>RPOZ_ACICJ</name>
<accession>A5FVX2</accession>
<evidence type="ECO:0000255" key="1">
    <source>
        <dbReference type="HAMAP-Rule" id="MF_00366"/>
    </source>
</evidence>
<comment type="function">
    <text evidence="1">Promotes RNA polymerase assembly. Latches the N- and C-terminal regions of the beta' subunit thereby facilitating its interaction with the beta and alpha subunits.</text>
</comment>
<comment type="catalytic activity">
    <reaction evidence="1">
        <text>RNA(n) + a ribonucleoside 5'-triphosphate = RNA(n+1) + diphosphate</text>
        <dbReference type="Rhea" id="RHEA:21248"/>
        <dbReference type="Rhea" id="RHEA-COMP:14527"/>
        <dbReference type="Rhea" id="RHEA-COMP:17342"/>
        <dbReference type="ChEBI" id="CHEBI:33019"/>
        <dbReference type="ChEBI" id="CHEBI:61557"/>
        <dbReference type="ChEBI" id="CHEBI:140395"/>
        <dbReference type="EC" id="2.7.7.6"/>
    </reaction>
</comment>
<comment type="subunit">
    <text evidence="1">The RNAP catalytic core consists of 2 alpha, 1 beta, 1 beta' and 1 omega subunit. When a sigma factor is associated with the core the holoenzyme is formed, which can initiate transcription.</text>
</comment>
<comment type="similarity">
    <text evidence="1">Belongs to the RNA polymerase subunit omega family.</text>
</comment>